<protein>
    <recommendedName>
        <fullName>Transport protein particle subunit bet3</fullName>
        <shortName>TRAPP subunit bet3</shortName>
    </recommendedName>
</protein>
<comment type="subcellular location">
    <subcellularLocation>
        <location evidence="2">Cytoplasm</location>
    </subcellularLocation>
    <subcellularLocation>
        <location evidence="1">Golgi apparatus</location>
        <location evidence="1">cis-Golgi network</location>
    </subcellularLocation>
    <subcellularLocation>
        <location evidence="1">Endoplasmic reticulum</location>
    </subcellularLocation>
</comment>
<comment type="similarity">
    <text evidence="3">Belongs to the TRAPP small subunits family. BET3 subfamily.</text>
</comment>
<feature type="chain" id="PRO_0000317084" description="Transport protein particle subunit bet3">
    <location>
        <begin position="1"/>
        <end position="183"/>
    </location>
</feature>
<feature type="lipid moiety-binding region" description="S-palmitoyl cysteine" evidence="1">
    <location>
        <position position="70"/>
    </location>
</feature>
<evidence type="ECO:0000250" key="1"/>
<evidence type="ECO:0000269" key="2">
    <source>
    </source>
</evidence>
<evidence type="ECO:0000305" key="3"/>
<dbReference type="EMBL" id="CU329670">
    <property type="protein sequence ID" value="CAB90145.1"/>
    <property type="molecule type" value="Genomic_DNA"/>
</dbReference>
<dbReference type="RefSeq" id="NP_593886.1">
    <property type="nucleotide sequence ID" value="NM_001019316.2"/>
</dbReference>
<dbReference type="SMR" id="Q9P6P5"/>
<dbReference type="BioGRID" id="279985">
    <property type="interactions" value="2"/>
</dbReference>
<dbReference type="FunCoup" id="Q9P6P5">
    <property type="interactions" value="775"/>
</dbReference>
<dbReference type="STRING" id="284812.Q9P6P5"/>
<dbReference type="PaxDb" id="4896-SPAC644.18c.1"/>
<dbReference type="EnsemblFungi" id="SPAC644.18c.1">
    <property type="protein sequence ID" value="SPAC644.18c.1:pep"/>
    <property type="gene ID" value="SPAC644.18c"/>
</dbReference>
<dbReference type="GeneID" id="2543570"/>
<dbReference type="KEGG" id="spo:2543570"/>
<dbReference type="PomBase" id="SPAC644.18c">
    <property type="gene designation" value="bet3"/>
</dbReference>
<dbReference type="VEuPathDB" id="FungiDB:SPAC644.18c"/>
<dbReference type="eggNOG" id="KOG3330">
    <property type="taxonomic scope" value="Eukaryota"/>
</dbReference>
<dbReference type="HOGENOM" id="CLU_087110_0_0_1"/>
<dbReference type="InParanoid" id="Q9P6P5"/>
<dbReference type="OMA" id="MVQMQVQ"/>
<dbReference type="PhylomeDB" id="Q9P6P5"/>
<dbReference type="Reactome" id="R-SPO-204005">
    <property type="pathway name" value="COPII-mediated vesicle transport"/>
</dbReference>
<dbReference type="Reactome" id="R-SPO-8876198">
    <property type="pathway name" value="RAB GEFs exchange GTP for GDP on RABs"/>
</dbReference>
<dbReference type="PRO" id="PR:Q9P6P5"/>
<dbReference type="Proteomes" id="UP000002485">
    <property type="component" value="Chromosome I"/>
</dbReference>
<dbReference type="GO" id="GO:0033106">
    <property type="term" value="C:cis-Golgi network membrane"/>
    <property type="evidence" value="ECO:0000318"/>
    <property type="project" value="GO_Central"/>
</dbReference>
<dbReference type="GO" id="GO:0005829">
    <property type="term" value="C:cytosol"/>
    <property type="evidence" value="ECO:0007005"/>
    <property type="project" value="PomBase"/>
</dbReference>
<dbReference type="GO" id="GO:0005783">
    <property type="term" value="C:endoplasmic reticulum"/>
    <property type="evidence" value="ECO:0007669"/>
    <property type="project" value="UniProtKB-SubCell"/>
</dbReference>
<dbReference type="GO" id="GO:0005634">
    <property type="term" value="C:nucleus"/>
    <property type="evidence" value="ECO:0007005"/>
    <property type="project" value="PomBase"/>
</dbReference>
<dbReference type="GO" id="GO:0030008">
    <property type="term" value="C:TRAPP complex"/>
    <property type="evidence" value="ECO:0000318"/>
    <property type="project" value="GO_Central"/>
</dbReference>
<dbReference type="GO" id="GO:1990070">
    <property type="term" value="C:TRAPPI protein complex"/>
    <property type="evidence" value="ECO:0000266"/>
    <property type="project" value="PomBase"/>
</dbReference>
<dbReference type="GO" id="GO:1990071">
    <property type="term" value="C:TRAPPII protein complex"/>
    <property type="evidence" value="ECO:0000266"/>
    <property type="project" value="PomBase"/>
</dbReference>
<dbReference type="GO" id="GO:1990072">
    <property type="term" value="C:TRAPPIII protein complex"/>
    <property type="evidence" value="ECO:0000266"/>
    <property type="project" value="PomBase"/>
</dbReference>
<dbReference type="GO" id="GO:0006888">
    <property type="term" value="P:endoplasmic reticulum to Golgi vesicle-mediated transport"/>
    <property type="evidence" value="ECO:0000318"/>
    <property type="project" value="GO_Central"/>
</dbReference>
<dbReference type="GO" id="GO:0006891">
    <property type="term" value="P:intra-Golgi vesicle-mediated transport"/>
    <property type="evidence" value="ECO:0000318"/>
    <property type="project" value="GO_Central"/>
</dbReference>
<dbReference type="GO" id="GO:0006886">
    <property type="term" value="P:intracellular protein transport"/>
    <property type="evidence" value="ECO:0000266"/>
    <property type="project" value="PomBase"/>
</dbReference>
<dbReference type="GO" id="GO:0016236">
    <property type="term" value="P:macroautophagy"/>
    <property type="evidence" value="ECO:0000305"/>
    <property type="project" value="PomBase"/>
</dbReference>
<dbReference type="CDD" id="cd14942">
    <property type="entry name" value="TRAPPC3_bet3"/>
    <property type="match status" value="1"/>
</dbReference>
<dbReference type="FunFam" id="3.30.1380.20:FF:000001">
    <property type="entry name" value="Trafficking protein particle complex subunit BET3"/>
    <property type="match status" value="1"/>
</dbReference>
<dbReference type="Gene3D" id="3.30.1380.20">
    <property type="entry name" value="Trafficking protein particle complex subunit 3"/>
    <property type="match status" value="1"/>
</dbReference>
<dbReference type="InterPro" id="IPR016721">
    <property type="entry name" value="Bet3"/>
</dbReference>
<dbReference type="InterPro" id="IPR024096">
    <property type="entry name" value="NO_sig/Golgi_transp_ligand-bd"/>
</dbReference>
<dbReference type="InterPro" id="IPR007194">
    <property type="entry name" value="TRAPP_component"/>
</dbReference>
<dbReference type="PANTHER" id="PTHR13048">
    <property type="entry name" value="TRAFFICKING PROTEIN PARTICLE COMPLEX SUBUNIT 3"/>
    <property type="match status" value="1"/>
</dbReference>
<dbReference type="Pfam" id="PF04051">
    <property type="entry name" value="TRAPP"/>
    <property type="match status" value="1"/>
</dbReference>
<dbReference type="PIRSF" id="PIRSF018293">
    <property type="entry name" value="TRAPP_I_complex_Bet3"/>
    <property type="match status" value="1"/>
</dbReference>
<dbReference type="SUPFAM" id="SSF111126">
    <property type="entry name" value="Ligand-binding domain in the NO signalling and Golgi transport"/>
    <property type="match status" value="1"/>
</dbReference>
<sequence>MSKSKIGEDVYKKVDKVNAELFVLTYGSIVAQLCKDMNYEKVNEELDKMGYNIGIRLIEDFLAKTEWPRCADFRETGETVAKVGFKVFLNFSPIISSVSDDGNTFVLTLDDNPLAEFVELPADARQKLWYSNILCGVIRGALEMLQMDVDAVFLRDILRGDEHTEIRVHLKRILKEEIPPGDE</sequence>
<keyword id="KW-0963">Cytoplasm</keyword>
<keyword id="KW-0256">Endoplasmic reticulum</keyword>
<keyword id="KW-0931">ER-Golgi transport</keyword>
<keyword id="KW-0333">Golgi apparatus</keyword>
<keyword id="KW-0449">Lipoprotein</keyword>
<keyword id="KW-0564">Palmitate</keyword>
<keyword id="KW-1185">Reference proteome</keyword>
<keyword id="KW-0813">Transport</keyword>
<reference key="1">
    <citation type="journal article" date="2002" name="Nature">
        <title>The genome sequence of Schizosaccharomyces pombe.</title>
        <authorList>
            <person name="Wood V."/>
            <person name="Gwilliam R."/>
            <person name="Rajandream M.A."/>
            <person name="Lyne M.H."/>
            <person name="Lyne R."/>
            <person name="Stewart A."/>
            <person name="Sgouros J.G."/>
            <person name="Peat N."/>
            <person name="Hayles J."/>
            <person name="Baker S.G."/>
            <person name="Basham D."/>
            <person name="Bowman S."/>
            <person name="Brooks K."/>
            <person name="Brown D."/>
            <person name="Brown S."/>
            <person name="Chillingworth T."/>
            <person name="Churcher C.M."/>
            <person name="Collins M."/>
            <person name="Connor R."/>
            <person name="Cronin A."/>
            <person name="Davis P."/>
            <person name="Feltwell T."/>
            <person name="Fraser A."/>
            <person name="Gentles S."/>
            <person name="Goble A."/>
            <person name="Hamlin N."/>
            <person name="Harris D.E."/>
            <person name="Hidalgo J."/>
            <person name="Hodgson G."/>
            <person name="Holroyd S."/>
            <person name="Hornsby T."/>
            <person name="Howarth S."/>
            <person name="Huckle E.J."/>
            <person name="Hunt S."/>
            <person name="Jagels K."/>
            <person name="James K.D."/>
            <person name="Jones L."/>
            <person name="Jones M."/>
            <person name="Leather S."/>
            <person name="McDonald S."/>
            <person name="McLean J."/>
            <person name="Mooney P."/>
            <person name="Moule S."/>
            <person name="Mungall K.L."/>
            <person name="Murphy L.D."/>
            <person name="Niblett D."/>
            <person name="Odell C."/>
            <person name="Oliver K."/>
            <person name="O'Neil S."/>
            <person name="Pearson D."/>
            <person name="Quail M.A."/>
            <person name="Rabbinowitsch E."/>
            <person name="Rutherford K.M."/>
            <person name="Rutter S."/>
            <person name="Saunders D."/>
            <person name="Seeger K."/>
            <person name="Sharp S."/>
            <person name="Skelton J."/>
            <person name="Simmonds M.N."/>
            <person name="Squares R."/>
            <person name="Squares S."/>
            <person name="Stevens K."/>
            <person name="Taylor K."/>
            <person name="Taylor R.G."/>
            <person name="Tivey A."/>
            <person name="Walsh S.V."/>
            <person name="Warren T."/>
            <person name="Whitehead S."/>
            <person name="Woodward J.R."/>
            <person name="Volckaert G."/>
            <person name="Aert R."/>
            <person name="Robben J."/>
            <person name="Grymonprez B."/>
            <person name="Weltjens I."/>
            <person name="Vanstreels E."/>
            <person name="Rieger M."/>
            <person name="Schaefer M."/>
            <person name="Mueller-Auer S."/>
            <person name="Gabel C."/>
            <person name="Fuchs M."/>
            <person name="Duesterhoeft A."/>
            <person name="Fritzc C."/>
            <person name="Holzer E."/>
            <person name="Moestl D."/>
            <person name="Hilbert H."/>
            <person name="Borzym K."/>
            <person name="Langer I."/>
            <person name="Beck A."/>
            <person name="Lehrach H."/>
            <person name="Reinhardt R."/>
            <person name="Pohl T.M."/>
            <person name="Eger P."/>
            <person name="Zimmermann W."/>
            <person name="Wedler H."/>
            <person name="Wambutt R."/>
            <person name="Purnelle B."/>
            <person name="Goffeau A."/>
            <person name="Cadieu E."/>
            <person name="Dreano S."/>
            <person name="Gloux S."/>
            <person name="Lelaure V."/>
            <person name="Mottier S."/>
            <person name="Galibert F."/>
            <person name="Aves S.J."/>
            <person name="Xiang Z."/>
            <person name="Hunt C."/>
            <person name="Moore K."/>
            <person name="Hurst S.M."/>
            <person name="Lucas M."/>
            <person name="Rochet M."/>
            <person name="Gaillardin C."/>
            <person name="Tallada V.A."/>
            <person name="Garzon A."/>
            <person name="Thode G."/>
            <person name="Daga R.R."/>
            <person name="Cruzado L."/>
            <person name="Jimenez J."/>
            <person name="Sanchez M."/>
            <person name="del Rey F."/>
            <person name="Benito J."/>
            <person name="Dominguez A."/>
            <person name="Revuelta J.L."/>
            <person name="Moreno S."/>
            <person name="Armstrong J."/>
            <person name="Forsburg S.L."/>
            <person name="Cerutti L."/>
            <person name="Lowe T."/>
            <person name="McCombie W.R."/>
            <person name="Paulsen I."/>
            <person name="Potashkin J."/>
            <person name="Shpakovski G.V."/>
            <person name="Ussery D."/>
            <person name="Barrell B.G."/>
            <person name="Nurse P."/>
        </authorList>
    </citation>
    <scope>NUCLEOTIDE SEQUENCE [LARGE SCALE GENOMIC DNA]</scope>
    <source>
        <strain>972 / ATCC 24843</strain>
    </source>
</reference>
<reference key="2">
    <citation type="journal article" date="2006" name="Nat. Biotechnol.">
        <title>ORFeome cloning and global analysis of protein localization in the fission yeast Schizosaccharomyces pombe.</title>
        <authorList>
            <person name="Matsuyama A."/>
            <person name="Arai R."/>
            <person name="Yashiroda Y."/>
            <person name="Shirai A."/>
            <person name="Kamata A."/>
            <person name="Sekido S."/>
            <person name="Kobayashi Y."/>
            <person name="Hashimoto A."/>
            <person name="Hamamoto M."/>
            <person name="Hiraoka Y."/>
            <person name="Horinouchi S."/>
            <person name="Yoshida M."/>
        </authorList>
    </citation>
    <scope>SUBCELLULAR LOCATION [LARGE SCALE ANALYSIS]</scope>
</reference>
<accession>Q9P6P5</accession>
<proteinExistence type="inferred from homology"/>
<organism>
    <name type="scientific">Schizosaccharomyces pombe (strain 972 / ATCC 24843)</name>
    <name type="common">Fission yeast</name>
    <dbReference type="NCBI Taxonomy" id="284812"/>
    <lineage>
        <taxon>Eukaryota</taxon>
        <taxon>Fungi</taxon>
        <taxon>Dikarya</taxon>
        <taxon>Ascomycota</taxon>
        <taxon>Taphrinomycotina</taxon>
        <taxon>Schizosaccharomycetes</taxon>
        <taxon>Schizosaccharomycetales</taxon>
        <taxon>Schizosaccharomycetaceae</taxon>
        <taxon>Schizosaccharomyces</taxon>
    </lineage>
</organism>
<gene>
    <name type="primary">bet3</name>
    <name type="ORF">SPAC644.18c</name>
</gene>
<name>BET3_SCHPO</name>